<dbReference type="EC" id="3.1.2.-" evidence="1"/>
<dbReference type="EMBL" id="CP000822">
    <property type="protein sequence ID" value="ABV13673.1"/>
    <property type="molecule type" value="Genomic_DNA"/>
</dbReference>
<dbReference type="RefSeq" id="WP_012133392.1">
    <property type="nucleotide sequence ID" value="NC_009792.1"/>
</dbReference>
<dbReference type="SMR" id="A8AJL0"/>
<dbReference type="STRING" id="290338.CKO_02564"/>
<dbReference type="GeneID" id="45136435"/>
<dbReference type="KEGG" id="cko:CKO_02564"/>
<dbReference type="HOGENOM" id="CLU_089876_13_1_6"/>
<dbReference type="OrthoDB" id="9798208at2"/>
<dbReference type="UniPathway" id="UPA00017"/>
<dbReference type="Proteomes" id="UP000008148">
    <property type="component" value="Chromosome"/>
</dbReference>
<dbReference type="GO" id="GO:0005829">
    <property type="term" value="C:cytosol"/>
    <property type="evidence" value="ECO:0007669"/>
    <property type="project" value="TreeGrafter"/>
</dbReference>
<dbReference type="GO" id="GO:0061522">
    <property type="term" value="F:1,4-dihydroxy-2-naphthoyl-CoA thioesterase activity"/>
    <property type="evidence" value="ECO:0007669"/>
    <property type="project" value="TreeGrafter"/>
</dbReference>
<dbReference type="GO" id="GO:0009239">
    <property type="term" value="P:enterobactin biosynthetic process"/>
    <property type="evidence" value="ECO:0007669"/>
    <property type="project" value="UniProtKB-UniRule"/>
</dbReference>
<dbReference type="CDD" id="cd03443">
    <property type="entry name" value="PaaI_thioesterase"/>
    <property type="match status" value="1"/>
</dbReference>
<dbReference type="FunFam" id="3.10.129.10:FF:000002">
    <property type="entry name" value="1,4-dihydroxy-2-naphthoyl-CoA hydrolase"/>
    <property type="match status" value="1"/>
</dbReference>
<dbReference type="Gene3D" id="3.10.129.10">
    <property type="entry name" value="Hotdog Thioesterase"/>
    <property type="match status" value="1"/>
</dbReference>
<dbReference type="HAMAP" id="MF_00907">
    <property type="entry name" value="Thioesterase_EntH"/>
    <property type="match status" value="1"/>
</dbReference>
<dbReference type="InterPro" id="IPR029069">
    <property type="entry name" value="HotDog_dom_sf"/>
</dbReference>
<dbReference type="InterPro" id="IPR003736">
    <property type="entry name" value="PAAI_dom"/>
</dbReference>
<dbReference type="InterPro" id="IPR026576">
    <property type="entry name" value="Thioesterase_EntH"/>
</dbReference>
<dbReference type="InterPro" id="IPR006683">
    <property type="entry name" value="Thioestr_dom"/>
</dbReference>
<dbReference type="NCBIfam" id="NF007607">
    <property type="entry name" value="PRK10254.1"/>
    <property type="match status" value="1"/>
</dbReference>
<dbReference type="NCBIfam" id="TIGR00369">
    <property type="entry name" value="unchar_dom_1"/>
    <property type="match status" value="1"/>
</dbReference>
<dbReference type="PANTHER" id="PTHR43240">
    <property type="entry name" value="1,4-DIHYDROXY-2-NAPHTHOYL-COA THIOESTERASE 1"/>
    <property type="match status" value="1"/>
</dbReference>
<dbReference type="PANTHER" id="PTHR43240:SF9">
    <property type="entry name" value="PROOFREADING THIOESTERASE ENTH"/>
    <property type="match status" value="1"/>
</dbReference>
<dbReference type="Pfam" id="PF03061">
    <property type="entry name" value="4HBT"/>
    <property type="match status" value="1"/>
</dbReference>
<dbReference type="SUPFAM" id="SSF54637">
    <property type="entry name" value="Thioesterase/thiol ester dehydrase-isomerase"/>
    <property type="match status" value="1"/>
</dbReference>
<reference key="1">
    <citation type="submission" date="2007-08" db="EMBL/GenBank/DDBJ databases">
        <authorList>
            <consortium name="The Citrobacter koseri Genome Sequencing Project"/>
            <person name="McClelland M."/>
            <person name="Sanderson E.K."/>
            <person name="Porwollik S."/>
            <person name="Spieth J."/>
            <person name="Clifton W.S."/>
            <person name="Latreille P."/>
            <person name="Courtney L."/>
            <person name="Wang C."/>
            <person name="Pepin K."/>
            <person name="Bhonagiri V."/>
            <person name="Nash W."/>
            <person name="Johnson M."/>
            <person name="Thiruvilangam P."/>
            <person name="Wilson R."/>
        </authorList>
    </citation>
    <scope>NUCLEOTIDE SEQUENCE [LARGE SCALE GENOMIC DNA]</scope>
    <source>
        <strain>ATCC BAA-895 / CDC 4225-83 / SGSC4696</strain>
    </source>
</reference>
<sequence length="137" mass="14928">MIWKRHLTLDELNATSLNTMVAHLAIVYTRLGDDVLEAEMPVDARTHQPFGLLHGGASAALAETLGSMAGYLMTRDGQCVVGTELNATHHRAVSQGKVRGVCQPLHLGRQSQSWEIVIFDEQGRRCCTCRLGTAVMG</sequence>
<comment type="function">
    <text evidence="1">Required for optimal enterobactin synthesis. Acts as a proofreading enzyme that prevents EntB misacylation by hydrolyzing the thioester bound existing between EntB and wrongly charged molecules.</text>
</comment>
<comment type="pathway">
    <text evidence="1">Siderophore biosynthesis; enterobactin biosynthesis.</text>
</comment>
<comment type="subunit">
    <text evidence="1">Homotetramer. Dimer of dimers. Interacts specifically with the aryl carrier protein (ArCP) domain of EntB.</text>
</comment>
<comment type="subcellular location">
    <subcellularLocation>
        <location evidence="1">Cytoplasm</location>
    </subcellularLocation>
</comment>
<comment type="similarity">
    <text evidence="1">Belongs to the thioesterase PaaI family.</text>
</comment>
<protein>
    <recommendedName>
        <fullName evidence="1">Proofreading thioesterase EntH</fullName>
        <ecNumber evidence="1">3.1.2.-</ecNumber>
    </recommendedName>
    <alternativeName>
        <fullName evidence="1">Enterobactin synthase component H</fullName>
    </alternativeName>
</protein>
<accession>A8AJL0</accession>
<keyword id="KW-0963">Cytoplasm</keyword>
<keyword id="KW-0378">Hydrolase</keyword>
<keyword id="KW-1185">Reference proteome</keyword>
<proteinExistence type="inferred from homology"/>
<organism>
    <name type="scientific">Citrobacter koseri (strain ATCC BAA-895 / CDC 4225-83 / SGSC4696)</name>
    <dbReference type="NCBI Taxonomy" id="290338"/>
    <lineage>
        <taxon>Bacteria</taxon>
        <taxon>Pseudomonadati</taxon>
        <taxon>Pseudomonadota</taxon>
        <taxon>Gammaproteobacteria</taxon>
        <taxon>Enterobacterales</taxon>
        <taxon>Enterobacteriaceae</taxon>
        <taxon>Citrobacter</taxon>
    </lineage>
</organism>
<feature type="chain" id="PRO_0000413862" description="Proofreading thioesterase EntH">
    <location>
        <begin position="1"/>
        <end position="137"/>
    </location>
</feature>
<feature type="active site" description="Nucleophile or proton acceptor" evidence="1">
    <location>
        <position position="63"/>
    </location>
</feature>
<evidence type="ECO:0000255" key="1">
    <source>
        <dbReference type="HAMAP-Rule" id="MF_00907"/>
    </source>
</evidence>
<gene>
    <name evidence="1" type="primary">entH</name>
    <name type="ordered locus">CKO_02564</name>
</gene>
<name>ENTH_CITK8</name>